<proteinExistence type="inferred from homology"/>
<dbReference type="EC" id="1.2.1.70" evidence="1"/>
<dbReference type="EMBL" id="BX936398">
    <property type="protein sequence ID" value="CAH21242.1"/>
    <property type="molecule type" value="Genomic_DNA"/>
</dbReference>
<dbReference type="RefSeq" id="WP_002211237.1">
    <property type="nucleotide sequence ID" value="NZ_CP009712.1"/>
</dbReference>
<dbReference type="SMR" id="Q66AX6"/>
<dbReference type="GeneID" id="57976645"/>
<dbReference type="KEGG" id="ypo:BZ17_463"/>
<dbReference type="KEGG" id="yps:YPTB2004"/>
<dbReference type="PATRIC" id="fig|273123.14.peg.492"/>
<dbReference type="UniPathway" id="UPA00251">
    <property type="reaction ID" value="UER00316"/>
</dbReference>
<dbReference type="Proteomes" id="UP000001011">
    <property type="component" value="Chromosome"/>
</dbReference>
<dbReference type="GO" id="GO:0008883">
    <property type="term" value="F:glutamyl-tRNA reductase activity"/>
    <property type="evidence" value="ECO:0007669"/>
    <property type="project" value="UniProtKB-UniRule"/>
</dbReference>
<dbReference type="GO" id="GO:0050661">
    <property type="term" value="F:NADP binding"/>
    <property type="evidence" value="ECO:0007669"/>
    <property type="project" value="InterPro"/>
</dbReference>
<dbReference type="GO" id="GO:0019353">
    <property type="term" value="P:protoporphyrinogen IX biosynthetic process from glutamate"/>
    <property type="evidence" value="ECO:0007669"/>
    <property type="project" value="TreeGrafter"/>
</dbReference>
<dbReference type="CDD" id="cd05213">
    <property type="entry name" value="NAD_bind_Glutamyl_tRNA_reduct"/>
    <property type="match status" value="1"/>
</dbReference>
<dbReference type="FunFam" id="3.30.460.30:FF:000001">
    <property type="entry name" value="Glutamyl-tRNA reductase"/>
    <property type="match status" value="1"/>
</dbReference>
<dbReference type="FunFam" id="3.40.50.720:FF:000031">
    <property type="entry name" value="Glutamyl-tRNA reductase"/>
    <property type="match status" value="1"/>
</dbReference>
<dbReference type="Gene3D" id="3.30.460.30">
    <property type="entry name" value="Glutamyl-tRNA reductase, N-terminal domain"/>
    <property type="match status" value="1"/>
</dbReference>
<dbReference type="Gene3D" id="3.40.50.720">
    <property type="entry name" value="NAD(P)-binding Rossmann-like Domain"/>
    <property type="match status" value="1"/>
</dbReference>
<dbReference type="HAMAP" id="MF_00087">
    <property type="entry name" value="Glu_tRNA_reductase"/>
    <property type="match status" value="1"/>
</dbReference>
<dbReference type="InterPro" id="IPR000343">
    <property type="entry name" value="4pyrrol_synth_GluRdtase"/>
</dbReference>
<dbReference type="InterPro" id="IPR015896">
    <property type="entry name" value="4pyrrol_synth_GluRdtase_dimer"/>
</dbReference>
<dbReference type="InterPro" id="IPR015895">
    <property type="entry name" value="4pyrrol_synth_GluRdtase_N"/>
</dbReference>
<dbReference type="InterPro" id="IPR018214">
    <property type="entry name" value="GluRdtase_CS"/>
</dbReference>
<dbReference type="InterPro" id="IPR036453">
    <property type="entry name" value="GluRdtase_dimer_dom_sf"/>
</dbReference>
<dbReference type="InterPro" id="IPR036343">
    <property type="entry name" value="GluRdtase_N_sf"/>
</dbReference>
<dbReference type="InterPro" id="IPR036291">
    <property type="entry name" value="NAD(P)-bd_dom_sf"/>
</dbReference>
<dbReference type="InterPro" id="IPR006151">
    <property type="entry name" value="Shikm_DH/Glu-tRNA_Rdtase"/>
</dbReference>
<dbReference type="NCBIfam" id="TIGR01035">
    <property type="entry name" value="hemA"/>
    <property type="match status" value="1"/>
</dbReference>
<dbReference type="PANTHER" id="PTHR43013">
    <property type="entry name" value="GLUTAMYL-TRNA REDUCTASE"/>
    <property type="match status" value="1"/>
</dbReference>
<dbReference type="PANTHER" id="PTHR43013:SF1">
    <property type="entry name" value="GLUTAMYL-TRNA REDUCTASE"/>
    <property type="match status" value="1"/>
</dbReference>
<dbReference type="Pfam" id="PF00745">
    <property type="entry name" value="GlutR_dimer"/>
    <property type="match status" value="1"/>
</dbReference>
<dbReference type="Pfam" id="PF05201">
    <property type="entry name" value="GlutR_N"/>
    <property type="match status" value="1"/>
</dbReference>
<dbReference type="Pfam" id="PF01488">
    <property type="entry name" value="Shikimate_DH"/>
    <property type="match status" value="1"/>
</dbReference>
<dbReference type="PIRSF" id="PIRSF000445">
    <property type="entry name" value="4pyrrol_synth_GluRdtase"/>
    <property type="match status" value="1"/>
</dbReference>
<dbReference type="SUPFAM" id="SSF69742">
    <property type="entry name" value="Glutamyl tRNA-reductase catalytic, N-terminal domain"/>
    <property type="match status" value="1"/>
</dbReference>
<dbReference type="SUPFAM" id="SSF69075">
    <property type="entry name" value="Glutamyl tRNA-reductase dimerization domain"/>
    <property type="match status" value="1"/>
</dbReference>
<dbReference type="SUPFAM" id="SSF51735">
    <property type="entry name" value="NAD(P)-binding Rossmann-fold domains"/>
    <property type="match status" value="1"/>
</dbReference>
<dbReference type="PROSITE" id="PS00747">
    <property type="entry name" value="GLUTR"/>
    <property type="match status" value="1"/>
</dbReference>
<protein>
    <recommendedName>
        <fullName evidence="1">Glutamyl-tRNA reductase</fullName>
        <shortName evidence="1">GluTR</shortName>
        <ecNumber evidence="1">1.2.1.70</ecNumber>
    </recommendedName>
</protein>
<evidence type="ECO:0000255" key="1">
    <source>
        <dbReference type="HAMAP-Rule" id="MF_00087"/>
    </source>
</evidence>
<accession>Q66AX6</accession>
<organism>
    <name type="scientific">Yersinia pseudotuberculosis serotype I (strain IP32953)</name>
    <dbReference type="NCBI Taxonomy" id="273123"/>
    <lineage>
        <taxon>Bacteria</taxon>
        <taxon>Pseudomonadati</taxon>
        <taxon>Pseudomonadota</taxon>
        <taxon>Gammaproteobacteria</taxon>
        <taxon>Enterobacterales</taxon>
        <taxon>Yersiniaceae</taxon>
        <taxon>Yersinia</taxon>
    </lineage>
</organism>
<comment type="function">
    <text evidence="1">Catalyzes the NADPH-dependent reduction of glutamyl-tRNA(Glu) to glutamate 1-semialdehyde (GSA).</text>
</comment>
<comment type="catalytic activity">
    <reaction evidence="1">
        <text>(S)-4-amino-5-oxopentanoate + tRNA(Glu) + NADP(+) = L-glutamyl-tRNA(Glu) + NADPH + H(+)</text>
        <dbReference type="Rhea" id="RHEA:12344"/>
        <dbReference type="Rhea" id="RHEA-COMP:9663"/>
        <dbReference type="Rhea" id="RHEA-COMP:9680"/>
        <dbReference type="ChEBI" id="CHEBI:15378"/>
        <dbReference type="ChEBI" id="CHEBI:57501"/>
        <dbReference type="ChEBI" id="CHEBI:57783"/>
        <dbReference type="ChEBI" id="CHEBI:58349"/>
        <dbReference type="ChEBI" id="CHEBI:78442"/>
        <dbReference type="ChEBI" id="CHEBI:78520"/>
        <dbReference type="EC" id="1.2.1.70"/>
    </reaction>
</comment>
<comment type="pathway">
    <text evidence="1">Porphyrin-containing compound metabolism; protoporphyrin-IX biosynthesis; 5-aminolevulinate from L-glutamyl-tRNA(Glu): step 1/2.</text>
</comment>
<comment type="subunit">
    <text evidence="1">Homodimer.</text>
</comment>
<comment type="domain">
    <text evidence="1">Possesses an unusual extended V-shaped dimeric structure with each monomer consisting of three distinct domains arranged along a curved 'spinal' alpha-helix. The N-terminal catalytic domain specifically recognizes the glutamate moiety of the substrate. The second domain is the NADPH-binding domain, and the third C-terminal domain is responsible for dimerization.</text>
</comment>
<comment type="miscellaneous">
    <text evidence="1">During catalysis, the active site Cys acts as a nucleophile attacking the alpha-carbonyl group of tRNA-bound glutamate with the formation of a thioester intermediate between enzyme and glutamate, and the concomitant release of tRNA(Glu). The thioester intermediate is finally reduced by direct hydride transfer from NADPH, to form the product GSA.</text>
</comment>
<comment type="similarity">
    <text evidence="1">Belongs to the glutamyl-tRNA reductase family.</text>
</comment>
<gene>
    <name evidence="1" type="primary">hemA</name>
    <name type="ordered locus">YPTB2004</name>
</gene>
<sequence length="420" mass="46660">MTLLALGINHKTAPVSLRERVTFSPESMDQALNSLLQQPLVQGGVVLSTCNRTELYLSVEQQENLHEQLTAWLCNYHKLSPDDVRQSLYWHHGNDAVRHLMRVASGLDSQVLGEPQILGQVKKAFAESQRGQSLSSELERLFQKSFSVAKRVRTETEIGASAVSVAFAACSLARQIFESLSELHVLLVGAGETIELVARHLREHQVKHMIIANRTRERAQSLASEVGAEVITLPEIDARLADADIIISSTASPLPIIGKGMVERALKTRRNQPMLFIDIAVPRDIEPEVGKLSNAYLYSVDDLQAIIQHNMAQRQAAAVQAESIVQQESMNFMTWLRAQGAVETIRDYRSQAEQVRSEMTAKALVAIEQGANVEQVINELAYKLTNRLIHAPTKSLQQAASDGDMERLQLLRDSLGLDQH</sequence>
<keyword id="KW-0521">NADP</keyword>
<keyword id="KW-0560">Oxidoreductase</keyword>
<keyword id="KW-0627">Porphyrin biosynthesis</keyword>
<name>HEM1_YERPS</name>
<feature type="chain" id="PRO_0000114095" description="Glutamyl-tRNA reductase">
    <location>
        <begin position="1"/>
        <end position="420"/>
    </location>
</feature>
<feature type="active site" description="Nucleophile" evidence="1">
    <location>
        <position position="50"/>
    </location>
</feature>
<feature type="binding site" evidence="1">
    <location>
        <begin position="49"/>
        <end position="52"/>
    </location>
    <ligand>
        <name>substrate</name>
    </ligand>
</feature>
<feature type="binding site" evidence="1">
    <location>
        <position position="109"/>
    </location>
    <ligand>
        <name>substrate</name>
    </ligand>
</feature>
<feature type="binding site" evidence="1">
    <location>
        <begin position="114"/>
        <end position="116"/>
    </location>
    <ligand>
        <name>substrate</name>
    </ligand>
</feature>
<feature type="binding site" evidence="1">
    <location>
        <position position="120"/>
    </location>
    <ligand>
        <name>substrate</name>
    </ligand>
</feature>
<feature type="binding site" evidence="1">
    <location>
        <begin position="189"/>
        <end position="194"/>
    </location>
    <ligand>
        <name>NADP(+)</name>
        <dbReference type="ChEBI" id="CHEBI:58349"/>
    </ligand>
</feature>
<feature type="site" description="Important for activity" evidence="1">
    <location>
        <position position="99"/>
    </location>
</feature>
<reference key="1">
    <citation type="journal article" date="2004" name="Proc. Natl. Acad. Sci. U.S.A.">
        <title>Insights into the evolution of Yersinia pestis through whole-genome comparison with Yersinia pseudotuberculosis.</title>
        <authorList>
            <person name="Chain P.S.G."/>
            <person name="Carniel E."/>
            <person name="Larimer F.W."/>
            <person name="Lamerdin J."/>
            <person name="Stoutland P.O."/>
            <person name="Regala W.M."/>
            <person name="Georgescu A.M."/>
            <person name="Vergez L.M."/>
            <person name="Land M.L."/>
            <person name="Motin V.L."/>
            <person name="Brubaker R.R."/>
            <person name="Fowler J."/>
            <person name="Hinnebusch J."/>
            <person name="Marceau M."/>
            <person name="Medigue C."/>
            <person name="Simonet M."/>
            <person name="Chenal-Francisque V."/>
            <person name="Souza B."/>
            <person name="Dacheux D."/>
            <person name="Elliott J.M."/>
            <person name="Derbise A."/>
            <person name="Hauser L.J."/>
            <person name="Garcia E."/>
        </authorList>
    </citation>
    <scope>NUCLEOTIDE SEQUENCE [LARGE SCALE GENOMIC DNA]</scope>
    <source>
        <strain>IP32953</strain>
    </source>
</reference>